<dbReference type="EMBL" id="CP001161">
    <property type="protein sequence ID" value="ACL30741.1"/>
    <property type="molecule type" value="Genomic_DNA"/>
</dbReference>
<dbReference type="RefSeq" id="WP_009874344.1">
    <property type="nucleotide sequence ID" value="NC_011833.1"/>
</dbReference>
<dbReference type="SMR" id="B8D9H0"/>
<dbReference type="KEGG" id="bap:BUAP5A_380"/>
<dbReference type="HOGENOM" id="CLU_061463_3_3_6"/>
<dbReference type="OrthoDB" id="9813334at2"/>
<dbReference type="Proteomes" id="UP000006904">
    <property type="component" value="Chromosome"/>
</dbReference>
<dbReference type="GO" id="GO:0005737">
    <property type="term" value="C:cytoplasm"/>
    <property type="evidence" value="ECO:0007669"/>
    <property type="project" value="UniProtKB-ARBA"/>
</dbReference>
<dbReference type="GO" id="GO:1990904">
    <property type="term" value="C:ribonucleoprotein complex"/>
    <property type="evidence" value="ECO:0007669"/>
    <property type="project" value="UniProtKB-KW"/>
</dbReference>
<dbReference type="GO" id="GO:0005840">
    <property type="term" value="C:ribosome"/>
    <property type="evidence" value="ECO:0007669"/>
    <property type="project" value="UniProtKB-KW"/>
</dbReference>
<dbReference type="GO" id="GO:0019843">
    <property type="term" value="F:rRNA binding"/>
    <property type="evidence" value="ECO:0007669"/>
    <property type="project" value="UniProtKB-UniRule"/>
</dbReference>
<dbReference type="GO" id="GO:0003735">
    <property type="term" value="F:structural constituent of ribosome"/>
    <property type="evidence" value="ECO:0007669"/>
    <property type="project" value="InterPro"/>
</dbReference>
<dbReference type="GO" id="GO:0006412">
    <property type="term" value="P:translation"/>
    <property type="evidence" value="ECO:0007669"/>
    <property type="project" value="UniProtKB-UniRule"/>
</dbReference>
<dbReference type="HAMAP" id="MF_01363">
    <property type="entry name" value="Ribosomal_bL21"/>
    <property type="match status" value="1"/>
</dbReference>
<dbReference type="InterPro" id="IPR028909">
    <property type="entry name" value="bL21-like"/>
</dbReference>
<dbReference type="InterPro" id="IPR036164">
    <property type="entry name" value="bL21-like_sf"/>
</dbReference>
<dbReference type="InterPro" id="IPR001787">
    <property type="entry name" value="Ribosomal_bL21"/>
</dbReference>
<dbReference type="InterPro" id="IPR018258">
    <property type="entry name" value="Ribosomal_bL21_CS"/>
</dbReference>
<dbReference type="NCBIfam" id="TIGR00061">
    <property type="entry name" value="L21"/>
    <property type="match status" value="1"/>
</dbReference>
<dbReference type="PANTHER" id="PTHR21349">
    <property type="entry name" value="50S RIBOSOMAL PROTEIN L21"/>
    <property type="match status" value="1"/>
</dbReference>
<dbReference type="PANTHER" id="PTHR21349:SF0">
    <property type="entry name" value="LARGE RIBOSOMAL SUBUNIT PROTEIN BL21M"/>
    <property type="match status" value="1"/>
</dbReference>
<dbReference type="Pfam" id="PF00829">
    <property type="entry name" value="Ribosomal_L21p"/>
    <property type="match status" value="1"/>
</dbReference>
<dbReference type="SUPFAM" id="SSF141091">
    <property type="entry name" value="L21p-like"/>
    <property type="match status" value="1"/>
</dbReference>
<dbReference type="PROSITE" id="PS01169">
    <property type="entry name" value="RIBOSOMAL_L21"/>
    <property type="match status" value="1"/>
</dbReference>
<name>RL21_BUCA5</name>
<gene>
    <name evidence="1" type="primary">rplU</name>
    <name type="ordered locus">BUAP5A_380</name>
</gene>
<keyword id="KW-0687">Ribonucleoprotein</keyword>
<keyword id="KW-0689">Ribosomal protein</keyword>
<keyword id="KW-0694">RNA-binding</keyword>
<keyword id="KW-0699">rRNA-binding</keyword>
<sequence>MYAVFISGGKQYRVVKNQIIRLEKLNSPLGTTIEFDKILMLFDKDSIKIGTPFVEGGTIKAHIQNHGRLKKIKIIKFNRRKHYKKQQGHRQYFTDVKIIDINSIKGEV</sequence>
<reference key="1">
    <citation type="journal article" date="2009" name="Science">
        <title>The dynamics and time scale of ongoing genomic erosion in symbiotic bacteria.</title>
        <authorList>
            <person name="Moran N.A."/>
            <person name="McLaughlin H.J."/>
            <person name="Sorek R."/>
        </authorList>
    </citation>
    <scope>NUCLEOTIDE SEQUENCE [LARGE SCALE GENOMIC DNA]</scope>
    <source>
        <strain>5A</strain>
    </source>
</reference>
<feature type="chain" id="PRO_1000166707" description="Large ribosomal subunit protein bL21">
    <location>
        <begin position="1"/>
        <end position="108"/>
    </location>
</feature>
<evidence type="ECO:0000255" key="1">
    <source>
        <dbReference type="HAMAP-Rule" id="MF_01363"/>
    </source>
</evidence>
<evidence type="ECO:0000305" key="2"/>
<organism>
    <name type="scientific">Buchnera aphidicola subsp. Acyrthosiphon pisum (strain 5A)</name>
    <dbReference type="NCBI Taxonomy" id="563178"/>
    <lineage>
        <taxon>Bacteria</taxon>
        <taxon>Pseudomonadati</taxon>
        <taxon>Pseudomonadota</taxon>
        <taxon>Gammaproteobacteria</taxon>
        <taxon>Enterobacterales</taxon>
        <taxon>Erwiniaceae</taxon>
        <taxon>Buchnera</taxon>
    </lineage>
</organism>
<protein>
    <recommendedName>
        <fullName evidence="1">Large ribosomal subunit protein bL21</fullName>
    </recommendedName>
    <alternativeName>
        <fullName evidence="2">50S ribosomal protein L21</fullName>
    </alternativeName>
</protein>
<proteinExistence type="inferred from homology"/>
<comment type="function">
    <text evidence="1">This protein binds to 23S rRNA in the presence of protein L20.</text>
</comment>
<comment type="subunit">
    <text evidence="1">Part of the 50S ribosomal subunit. Contacts protein L20.</text>
</comment>
<comment type="similarity">
    <text evidence="1">Belongs to the bacterial ribosomal protein bL21 family.</text>
</comment>
<accession>B8D9H0</accession>